<accession>Q9W6C5</accession>
<dbReference type="EMBL" id="AF115497">
    <property type="protein sequence ID" value="AAD20341.1"/>
    <property type="molecule type" value="mRNA"/>
</dbReference>
<dbReference type="EMBL" id="BC043849">
    <property type="protein sequence ID" value="AAH43849.1"/>
    <property type="status" value="ALT_INIT"/>
    <property type="molecule type" value="mRNA"/>
</dbReference>
<dbReference type="RefSeq" id="NP_001081870.1">
    <molecule id="Q9W6C5-1"/>
    <property type="nucleotide sequence ID" value="NM_001088401.1"/>
</dbReference>
<dbReference type="SMR" id="Q9W6C5"/>
<dbReference type="BioGRID" id="99430">
    <property type="interactions" value="2"/>
</dbReference>
<dbReference type="GeneID" id="398095"/>
<dbReference type="KEGG" id="xla:398095"/>
<dbReference type="AGR" id="Xenbase:XB-GENE-1194427"/>
<dbReference type="CTD" id="398095"/>
<dbReference type="Xenbase" id="XB-GENE-1194427">
    <property type="gene designation" value="pdcd6ip.L"/>
</dbReference>
<dbReference type="OMA" id="VSHAEEM"/>
<dbReference type="OrthoDB" id="2141925at2759"/>
<dbReference type="Proteomes" id="UP000186698">
    <property type="component" value="Chromosome 6L"/>
</dbReference>
<dbReference type="GO" id="GO:0005923">
    <property type="term" value="C:bicellular tight junction"/>
    <property type="evidence" value="ECO:0007669"/>
    <property type="project" value="UniProtKB-SubCell"/>
</dbReference>
<dbReference type="GO" id="GO:0005813">
    <property type="term" value="C:centrosome"/>
    <property type="evidence" value="ECO:0007669"/>
    <property type="project" value="UniProtKB-SubCell"/>
</dbReference>
<dbReference type="GO" id="GO:0005829">
    <property type="term" value="C:cytosol"/>
    <property type="evidence" value="ECO:0007669"/>
    <property type="project" value="UniProtKB-SubCell"/>
</dbReference>
<dbReference type="GO" id="GO:0005768">
    <property type="term" value="C:endosome"/>
    <property type="evidence" value="ECO:0000318"/>
    <property type="project" value="GO_Central"/>
</dbReference>
<dbReference type="GO" id="GO:0070062">
    <property type="term" value="C:extracellular exosome"/>
    <property type="evidence" value="ECO:0000250"/>
    <property type="project" value="UniProtKB"/>
</dbReference>
<dbReference type="GO" id="GO:0090543">
    <property type="term" value="C:Flemming body"/>
    <property type="evidence" value="ECO:0000250"/>
    <property type="project" value="UniProtKB"/>
</dbReference>
<dbReference type="GO" id="GO:0042470">
    <property type="term" value="C:melanosome"/>
    <property type="evidence" value="ECO:0007669"/>
    <property type="project" value="UniProtKB-SubCell"/>
</dbReference>
<dbReference type="GO" id="GO:0000281">
    <property type="term" value="P:mitotic cytokinesis"/>
    <property type="evidence" value="ECO:0000250"/>
    <property type="project" value="UniProtKB"/>
</dbReference>
<dbReference type="GO" id="GO:0015031">
    <property type="term" value="P:protein transport"/>
    <property type="evidence" value="ECO:0007669"/>
    <property type="project" value="UniProtKB-KW"/>
</dbReference>
<dbReference type="CDD" id="cd09240">
    <property type="entry name" value="BRO1_Alix"/>
    <property type="match status" value="1"/>
</dbReference>
<dbReference type="CDD" id="cd09235">
    <property type="entry name" value="V_Alix"/>
    <property type="match status" value="1"/>
</dbReference>
<dbReference type="FunFam" id="1.25.40.280:FF:000001">
    <property type="entry name" value="programmed cell death 6-interacting protein-like isoform X1"/>
    <property type="match status" value="1"/>
</dbReference>
<dbReference type="Gene3D" id="1.20.120.560">
    <property type="entry name" value="alix/aip1 in complex with the ypdl late domain"/>
    <property type="match status" value="1"/>
</dbReference>
<dbReference type="Gene3D" id="1.20.140.50">
    <property type="entry name" value="alix/aip1 like domains"/>
    <property type="match status" value="1"/>
</dbReference>
<dbReference type="Gene3D" id="1.25.40.280">
    <property type="entry name" value="alix/aip1 like domains"/>
    <property type="match status" value="1"/>
</dbReference>
<dbReference type="InterPro" id="IPR025304">
    <property type="entry name" value="ALIX_V_dom"/>
</dbReference>
<dbReference type="InterPro" id="IPR004328">
    <property type="entry name" value="BRO1_dom"/>
</dbReference>
<dbReference type="InterPro" id="IPR038499">
    <property type="entry name" value="BRO1_sf"/>
</dbReference>
<dbReference type="PANTHER" id="PTHR23030">
    <property type="entry name" value="PCD6 INTERACTING PROTEIN-RELATED"/>
    <property type="match status" value="1"/>
</dbReference>
<dbReference type="PANTHER" id="PTHR23030:SF39">
    <property type="entry name" value="PROGRAMMED CELL DEATH 6-INTERACTING PROTEIN"/>
    <property type="match status" value="1"/>
</dbReference>
<dbReference type="Pfam" id="PF13949">
    <property type="entry name" value="ALIX_LYPXL_bnd"/>
    <property type="match status" value="1"/>
</dbReference>
<dbReference type="Pfam" id="PF03097">
    <property type="entry name" value="BRO1"/>
    <property type="match status" value="1"/>
</dbReference>
<dbReference type="SMART" id="SM01041">
    <property type="entry name" value="BRO1"/>
    <property type="match status" value="1"/>
</dbReference>
<dbReference type="PROSITE" id="PS51180">
    <property type="entry name" value="BRO1"/>
    <property type="match status" value="1"/>
</dbReference>
<feature type="chain" id="PRO_0000218894" description="Programmed cell death 6-interacting protein">
    <location>
        <begin position="1"/>
        <end position="867"/>
    </location>
</feature>
<feature type="domain" description="BRO1" evidence="4">
    <location>
        <begin position="3"/>
        <end position="391"/>
    </location>
</feature>
<feature type="region of interest" description="Disordered" evidence="5">
    <location>
        <begin position="714"/>
        <end position="809"/>
    </location>
</feature>
<feature type="region of interest" description="Disordered" evidence="5">
    <location>
        <begin position="835"/>
        <end position="867"/>
    </location>
</feature>
<feature type="compositionally biased region" description="Low complexity" evidence="5">
    <location>
        <begin position="729"/>
        <end position="744"/>
    </location>
</feature>
<feature type="compositionally biased region" description="Pro residues" evidence="5">
    <location>
        <begin position="756"/>
        <end position="766"/>
    </location>
</feature>
<feature type="compositionally biased region" description="Low complexity" evidence="5">
    <location>
        <begin position="767"/>
        <end position="791"/>
    </location>
</feature>
<feature type="compositionally biased region" description="Polar residues" evidence="5">
    <location>
        <begin position="792"/>
        <end position="803"/>
    </location>
</feature>
<feature type="compositionally biased region" description="Low complexity" evidence="5">
    <location>
        <begin position="852"/>
        <end position="861"/>
    </location>
</feature>
<feature type="splice variant" id="VSP_007503" description="In isoform 2." evidence="7">
    <original>K</original>
    <variation>KYFYFQ</variation>
    <location>
        <position position="238"/>
    </location>
</feature>
<proteinExistence type="evidence at protein level"/>
<organism>
    <name type="scientific">Xenopus laevis</name>
    <name type="common">African clawed frog</name>
    <dbReference type="NCBI Taxonomy" id="8355"/>
    <lineage>
        <taxon>Eukaryota</taxon>
        <taxon>Metazoa</taxon>
        <taxon>Chordata</taxon>
        <taxon>Craniata</taxon>
        <taxon>Vertebrata</taxon>
        <taxon>Euteleostomi</taxon>
        <taxon>Amphibia</taxon>
        <taxon>Batrachia</taxon>
        <taxon>Anura</taxon>
        <taxon>Pipoidea</taxon>
        <taxon>Pipidae</taxon>
        <taxon>Xenopodinae</taxon>
        <taxon>Xenopus</taxon>
        <taxon>Xenopus</taxon>
    </lineage>
</organism>
<protein>
    <recommendedName>
        <fullName>Programmed cell death 6-interacting protein</fullName>
    </recommendedName>
    <alternativeName>
        <fullName>Signal transduction protein Xp95</fullName>
    </alternativeName>
</protein>
<evidence type="ECO:0000250" key="1">
    <source>
        <dbReference type="UniProtKB" id="Q8WUM4"/>
    </source>
</evidence>
<evidence type="ECO:0000250" key="2">
    <source>
        <dbReference type="UniProtKB" id="Q9QZA2"/>
    </source>
</evidence>
<evidence type="ECO:0000250" key="3">
    <source>
        <dbReference type="UniProtKB" id="Q9WU78"/>
    </source>
</evidence>
<evidence type="ECO:0000255" key="4">
    <source>
        <dbReference type="PROSITE-ProRule" id="PRU00526"/>
    </source>
</evidence>
<evidence type="ECO:0000256" key="5">
    <source>
        <dbReference type="SAM" id="MobiDB-lite"/>
    </source>
</evidence>
<evidence type="ECO:0000269" key="6">
    <source>
    </source>
</evidence>
<evidence type="ECO:0000303" key="7">
    <source ref="2"/>
</evidence>
<evidence type="ECO:0000305" key="8"/>
<name>PDC6I_XENLA</name>
<gene>
    <name type="primary">pdcd6ip</name>
</gene>
<reference key="1">
    <citation type="journal article" date="1999" name="J. Biol. Chem.">
        <title>Identification and cloning of Xp95, a putative signal transduction protein in Xenopus oocytes.</title>
        <authorList>
            <person name="Che S."/>
            <person name="El-Hodiri H.M."/>
            <person name="Wu C.-F."/>
            <person name="Nelman-Gonzalez M."/>
            <person name="Weil M.M."/>
            <person name="Etkin L.D."/>
            <person name="Clark R.B."/>
            <person name="Kuang J."/>
        </authorList>
    </citation>
    <scope>NUCLEOTIDE SEQUENCE [MRNA] (ISOFORM 1)</scope>
    <scope>PHOSPHORYLATION</scope>
</reference>
<reference key="2">
    <citation type="submission" date="2003-01" db="EMBL/GenBank/DDBJ databases">
        <authorList>
            <consortium name="NIH - Xenopus Gene Collection (XGC) project"/>
        </authorList>
    </citation>
    <scope>NUCLEOTIDE SEQUENCE [LARGE SCALE MRNA] (ISOFORM 2)</scope>
    <source>
        <tissue>Embryo</tissue>
    </source>
</reference>
<keyword id="KW-0025">Alternative splicing</keyword>
<keyword id="KW-0965">Cell junction</keyword>
<keyword id="KW-0963">Cytoplasm</keyword>
<keyword id="KW-0206">Cytoskeleton</keyword>
<keyword id="KW-0597">Phosphoprotein</keyword>
<keyword id="KW-0653">Protein transport</keyword>
<keyword id="KW-1185">Reference proteome</keyword>
<keyword id="KW-0964">Secreted</keyword>
<keyword id="KW-0796">Tight junction</keyword>
<keyword id="KW-0813">Transport</keyword>
<sequence length="867" mass="96198">MATFISVPLKKTSEVDLVKPLSKYIHNTYPSGEDQTEYCRAVDELNKLRKSAVGRPLDKHETSLETVMRYYDQLCSVEPKFPFTESQLCLTFTWKDAFDKGSIFGGSVKLALPSLGYEKTCVLFNIGALASQIASEQNLDNDEALKAASKFYQLASGAFSHIKDTVLSSLNRDPTVDISPDTVGTLSLIMLAQAQEVFFLKATRDKMKDAVIAKLANQAADYYGDAFKQCQYKDTLSKEVFPILAAKHCIMQAHAEYHQSVLAKQQKKFGEEIGRLQHASDLVKTVSSRYDEYVNVKDLADKINRALTAAKKDNDFIYHDRVPDLKDLDPVGKASLVKSTPVNVPLSQKYTDLFEKMVPLAVQQCLSVYNQRKSELINSTIAQMRDATIFANGVLASLNLPAAVEDVSGDSIPQSILNKSKTVIEQGGIQTIGQLIRDLPELLQRNKEILEESLKFLDEEEATDNDLKAKFKDRWQRTPSTELYKPLRSEGSNFRNVLDKAIGADAVVKERYQSHREAIVILCKPEAELNAAIPSANPAKTMQGSEVVTVLKSLLNKLDDMKKEREQLENDIKSVNFDMTTKFLTALAQDGAVNEEAISVTELDQIYGSYTYKVQENLKKQEDLLNNIQSAHQEFSKMKQSNSEANLREEVLKNLAVGHDNYIELVANLKEGTKFYNDLTDILLKFQCKCSDIVFARKTERDELLKDIQQSIAREPSAPSIPQVPSYQSAPSSISTNIATSSIPTPAPRTVFSAKQPPPRPPPPAMPSASPVPASAAQASNPAPTAAADSSQPPSNTIPSQAQGPPYPSYPGYPGYYGMPMPVGYNPYMYGQQTIPPYMYQPPSGQPPYPAQQPSFSYPQQPFFPPQ</sequence>
<comment type="function">
    <text evidence="1 3">Multifunctional protein that may be involved in endocytosis, multivesicular body biogenesis, membrane repair, cytokinesis, apoptosis and maintenance of tight junction integrity. Class E VPS protein involved in concentration and sorting of cargo proteins of the multivesicular body (MVB) for incorporation into intralumenal vesicles that are generated by invagination and scission from the limiting membrane of the endosome (By similarity). Binds to the phospholipid lysobisphosphatidic acid (LBPA) which is abundant in MVBs internal membranes. May play a role in the regulation of both apoptosis and cell proliferation. Regulates exosome biogenesis in concert with SDC1/4 and SDCBP. Ensures the proper assembly and positioning of actomyosin-tight junction complex at the apical sides of adjacent epithelial cells that defines a spatial membrane domain essential for the maintenance of epithelial cell polarity and barrier (By similarity).</text>
</comment>
<comment type="subcellular location">
    <subcellularLocation>
        <location evidence="2">Cytoplasm</location>
        <location evidence="2">Cytosol</location>
    </subcellularLocation>
    <subcellularLocation>
        <location evidence="1">Melanosome</location>
    </subcellularLocation>
    <subcellularLocation>
        <location evidence="1">Cytoplasm</location>
        <location evidence="1">Cytoskeleton</location>
        <location evidence="1">Microtubule organizing center</location>
        <location evidence="1">Centrosome</location>
    </subcellularLocation>
    <subcellularLocation>
        <location evidence="1">Secreted</location>
        <location evidence="1">Extracellular exosome</location>
    </subcellularLocation>
    <subcellularLocation>
        <location evidence="3">Cell junction</location>
        <location evidence="3">Tight junction</location>
    </subcellularLocation>
    <subcellularLocation>
        <location evidence="1">Midbody</location>
        <location evidence="1">Midbody ring</location>
    </subcellularLocation>
    <text evidence="3">Component of the actomyosin-tight junction complex (By similarity).</text>
</comment>
<comment type="alternative products">
    <event type="alternative splicing"/>
    <isoform>
        <id>Q9W6C5-1</id>
        <name>1</name>
        <sequence type="displayed"/>
    </isoform>
    <isoform>
        <id>Q9W6C5-2</id>
        <name>2</name>
        <sequence type="described" ref="VSP_007503"/>
    </isoform>
</comment>
<comment type="PTM">
    <text evidence="6">Phosphorylated on tyrosine residues.</text>
</comment>
<comment type="sequence caution" evidence="8">
    <conflict type="erroneous initiation">
        <sequence resource="EMBL-CDS" id="AAH43849"/>
    </conflict>
    <text>Extended N-terminus.</text>
</comment>